<comment type="catalytic activity">
    <reaction>
        <text>ATP = 3',5'-cyclic AMP + diphosphate</text>
        <dbReference type="Rhea" id="RHEA:15389"/>
        <dbReference type="ChEBI" id="CHEBI:30616"/>
        <dbReference type="ChEBI" id="CHEBI:33019"/>
        <dbReference type="ChEBI" id="CHEBI:58165"/>
        <dbReference type="EC" id="4.6.1.1"/>
    </reaction>
</comment>
<comment type="activity regulation">
    <text>The regulatory domain is involved in the regulation of cyclase activity by the carbon source.</text>
</comment>
<comment type="subcellular location">
    <subcellularLocation>
        <location>Cytoplasm</location>
    </subcellularLocation>
</comment>
<comment type="similarity">
    <text evidence="2">Belongs to the adenylyl cyclase class-1 family.</text>
</comment>
<name>CYAA_YERIN</name>
<feature type="chain" id="PRO_0000195679" description="Adenylate cyclase">
    <location>
        <begin position="1"/>
        <end position="848"/>
    </location>
</feature>
<feature type="region of interest" description="Catalytic" evidence="1">
    <location>
        <begin position="1"/>
        <end position="535"/>
    </location>
</feature>
<feature type="region of interest" description="Regulatory" evidence="1">
    <location>
        <begin position="541"/>
        <end position="848"/>
    </location>
</feature>
<evidence type="ECO:0000255" key="1"/>
<evidence type="ECO:0000305" key="2"/>
<sequence length="848" mass="96879">MYLYIETLKQRLDAINQLRVDRALAAMGPTFQKVYSLLPTLLHCHHPLMPGYLDGNVPHGVCLFTPNETQQDYLSEVEAKWGEPLQQSVGGELPITGVYSMGSTSSIGQCHTSDLDVWVCHQAWLDSEERNRLQEKCSLLEKWAASMGVEVSFFLIDENRFRHNASGSLGGEDCGSTQHILLLDEFYRSAVRLAGKRILWNMVPVEEENNYDDYVLSLYAQGVLTPNEWLDLGGLSTLSAEEYFGASLWQLYKSIDSPYKAVLKTLLLEAYSWEYPNSQLLAMEIKQRLHAGEIVAFGLDAYCMMLDRVTRYLTQINDTTRLNLVRRCFYLKVCEKLSRSPASVGWRREILSQLVSEWGWSDESLAVLDNRANWKIERVREAHNELLDAMMQSYRNLIRFARRNNLSVSASPQDIGVLTRKLYAAFEALPGKVTLVNPQISPDLSEEHLTFIHVPAGRANRAGWYLYNQAPSMDAIVSHQPLEYNRYLNKLVSWAYFNGLLTSKTRLHIKSANLCDTVKLQELVTDISHHFPLRLPAPTPKALYSPCEIRHLAIIVNLEHDPTAAFRNQVVHFDFRKLDVFSFGEQQQCLVGSIDLLYRNSWNEVRTLHFSGEQAVLEALKTILGKMHQDAAPPESVDVFCYSQHLRGLIRTRIQQLVSECIELRLSSTRQEPGRFKAVRVSGHTWGLFFERLSVSVQKLENAVEFYGAISNNKLHGLSIQVETDQIHLPPVVDGFASEGIIQFFFEGTADEKGFNIYILDESNRVEVYHHCEGSKEALVRDVSRFYSSSHDRFTYGSSFINFNLPQFYQIVQLDGRTQVIPFRSNTLSHLYIVDREPSQPAQQFQLH</sequence>
<reference key="1">
    <citation type="submission" date="1992-06" db="EMBL/GenBank/DDBJ databases">
        <authorList>
            <person name="Glaser P."/>
            <person name="Sismeiro O."/>
            <person name="Danchin A."/>
        </authorList>
    </citation>
    <scope>NUCLEOTIDE SEQUENCE [GENOMIC DNA]</scope>
</reference>
<reference key="2">
    <citation type="journal article" date="1993" name="Adv. Second Messenger Phosphoprotein Res.">
        <title>Phylogeny of adenylyl cyclases.</title>
        <authorList>
            <person name="Danchin A."/>
        </authorList>
    </citation>
    <scope>REVIEW</scope>
</reference>
<accession>P30528</accession>
<proteinExistence type="inferred from homology"/>
<protein>
    <recommendedName>
        <fullName>Adenylate cyclase</fullName>
        <ecNumber>4.6.1.1</ecNumber>
    </recommendedName>
    <alternativeName>
        <fullName>ATP pyrophosphate-lyase</fullName>
    </alternativeName>
    <alternativeName>
        <fullName>Adenylyl cyclase</fullName>
    </alternativeName>
</protein>
<organism>
    <name type="scientific">Yersinia intermedia</name>
    <dbReference type="NCBI Taxonomy" id="631"/>
    <lineage>
        <taxon>Bacteria</taxon>
        <taxon>Pseudomonadati</taxon>
        <taxon>Pseudomonadota</taxon>
        <taxon>Gammaproteobacteria</taxon>
        <taxon>Enterobacterales</taxon>
        <taxon>Yersiniaceae</taxon>
        <taxon>Yersinia</taxon>
    </lineage>
</organism>
<keyword id="KW-0067">ATP-binding</keyword>
<keyword id="KW-0115">cAMP biosynthesis</keyword>
<keyword id="KW-0963">Cytoplasm</keyword>
<keyword id="KW-0456">Lyase</keyword>
<keyword id="KW-0547">Nucleotide-binding</keyword>
<gene>
    <name type="primary">cya</name>
</gene>
<dbReference type="EC" id="4.6.1.1"/>
<dbReference type="EMBL" id="X66781">
    <property type="protein sequence ID" value="CAA47277.1"/>
    <property type="status" value="ALT_SEQ"/>
    <property type="molecule type" value="Genomic_DNA"/>
</dbReference>
<dbReference type="PIR" id="S24981">
    <property type="entry name" value="S24981"/>
</dbReference>
<dbReference type="STRING" id="631.CH53_1993"/>
<dbReference type="eggNOG" id="COG3072">
    <property type="taxonomic scope" value="Bacteria"/>
</dbReference>
<dbReference type="GO" id="GO:0005737">
    <property type="term" value="C:cytoplasm"/>
    <property type="evidence" value="ECO:0007669"/>
    <property type="project" value="UniProtKB-SubCell"/>
</dbReference>
<dbReference type="GO" id="GO:0004016">
    <property type="term" value="F:adenylate cyclase activity"/>
    <property type="evidence" value="ECO:0007669"/>
    <property type="project" value="UniProtKB-EC"/>
</dbReference>
<dbReference type="GO" id="GO:0005524">
    <property type="term" value="F:ATP binding"/>
    <property type="evidence" value="ECO:0007669"/>
    <property type="project" value="UniProtKB-KW"/>
</dbReference>
<dbReference type="GO" id="GO:0006171">
    <property type="term" value="P:cAMP biosynthetic process"/>
    <property type="evidence" value="ECO:0007669"/>
    <property type="project" value="UniProtKB-KW"/>
</dbReference>
<dbReference type="InterPro" id="IPR000274">
    <property type="entry name" value="Adenylate_cyclase_1"/>
</dbReference>
<dbReference type="InterPro" id="IPR024686">
    <property type="entry name" value="Adenylate_cyclase_1_CS"/>
</dbReference>
<dbReference type="InterPro" id="IPR024685">
    <property type="entry name" value="Adenylate_cyclase_1_N"/>
</dbReference>
<dbReference type="NCBIfam" id="NF006977">
    <property type="entry name" value="PRK09450.1-1"/>
    <property type="match status" value="1"/>
</dbReference>
<dbReference type="NCBIfam" id="NF006978">
    <property type="entry name" value="PRK09450.1-2"/>
    <property type="match status" value="1"/>
</dbReference>
<dbReference type="NCBIfam" id="NF006979">
    <property type="entry name" value="PRK09450.1-4"/>
    <property type="match status" value="1"/>
</dbReference>
<dbReference type="PANTHER" id="PTHR38760">
    <property type="entry name" value="ADENYLATE CYCLASE"/>
    <property type="match status" value="1"/>
</dbReference>
<dbReference type="PANTHER" id="PTHR38760:SF1">
    <property type="entry name" value="ADENYLATE CYCLASE"/>
    <property type="match status" value="1"/>
</dbReference>
<dbReference type="Pfam" id="PF12633">
    <property type="entry name" value="Adenyl_cycl_N"/>
    <property type="match status" value="1"/>
</dbReference>
<dbReference type="Pfam" id="PF01295">
    <property type="entry name" value="Adenylate_cycl"/>
    <property type="match status" value="1"/>
</dbReference>
<dbReference type="PIRSF" id="PIRSF001444">
    <property type="entry name" value="Adenylate_cycl"/>
    <property type="match status" value="1"/>
</dbReference>
<dbReference type="PROSITE" id="PS01092">
    <property type="entry name" value="ADENYLATE_CYCLASE_1_1"/>
    <property type="match status" value="1"/>
</dbReference>
<dbReference type="PROSITE" id="PS01093">
    <property type="entry name" value="ADENYLATE_CYCLASE_1_2"/>
    <property type="match status" value="1"/>
</dbReference>